<comment type="subcellular location">
    <subcellularLocation>
        <location evidence="1">Cytoplasm</location>
    </subcellularLocation>
</comment>
<comment type="similarity">
    <text evidence="1">Belongs to the TACO1 family.</text>
</comment>
<keyword id="KW-0963">Cytoplasm</keyword>
<keyword id="KW-0238">DNA-binding</keyword>
<keyword id="KW-1185">Reference proteome</keyword>
<keyword id="KW-0804">Transcription</keyword>
<keyword id="KW-0805">Transcription regulation</keyword>
<evidence type="ECO:0000255" key="1">
    <source>
        <dbReference type="HAMAP-Rule" id="MF_00693"/>
    </source>
</evidence>
<evidence type="ECO:0000256" key="2">
    <source>
        <dbReference type="SAM" id="MobiDB-lite"/>
    </source>
</evidence>
<accession>A5V885</accession>
<reference key="1">
    <citation type="journal article" date="2010" name="J. Bacteriol.">
        <title>Genome sequence of the dioxin-mineralizing bacterium Sphingomonas wittichii RW1.</title>
        <authorList>
            <person name="Miller T.R."/>
            <person name="Delcher A.L."/>
            <person name="Salzberg S.L."/>
            <person name="Saunders E."/>
            <person name="Detter J.C."/>
            <person name="Halden R.U."/>
        </authorList>
    </citation>
    <scope>NUCLEOTIDE SEQUENCE [LARGE SCALE GENOMIC DNA]</scope>
    <source>
        <strain>DSM 6014 / CCUG 31198 / JCM 15750 / NBRC 105917 / EY 4224 / RW1</strain>
    </source>
</reference>
<gene>
    <name type="ordered locus">Swit_2142</name>
</gene>
<feature type="chain" id="PRO_1000045374" description="Probable transcriptional regulatory protein Swit_2142">
    <location>
        <begin position="1"/>
        <end position="247"/>
    </location>
</feature>
<feature type="region of interest" description="Disordered" evidence="2">
    <location>
        <begin position="1"/>
        <end position="21"/>
    </location>
</feature>
<feature type="compositionally biased region" description="Basic residues" evidence="2">
    <location>
        <begin position="1"/>
        <end position="14"/>
    </location>
</feature>
<name>Y2142_RHIWR</name>
<sequence length="247" mass="26348">MAGHSKFKNIMHRKGAQDKKRSALFSKLSREITVAARMGLPDPAMNARLRQAVITARKEGLPKDNIERSINKAAGGDGANYEEIRYEGFGPGGVALIIEALTDNRNRTATNVRTIVSKNGGNLGAGGSVSHGFDRLGLISYGLAAGDAEKVFEAALEAGADDVSSSEDGHEIWTAQDALHEVAKALEPVLGEPDGAKLAWRPQTQVTVGEDDAAKLLKLIDALDDDDDVQTVWGNYDVPEEVMAKLG</sequence>
<protein>
    <recommendedName>
        <fullName evidence="1">Probable transcriptional regulatory protein Swit_2142</fullName>
    </recommendedName>
</protein>
<dbReference type="EMBL" id="CP000699">
    <property type="protein sequence ID" value="ABQ68501.1"/>
    <property type="molecule type" value="Genomic_DNA"/>
</dbReference>
<dbReference type="SMR" id="A5V885"/>
<dbReference type="STRING" id="392499.Swit_2142"/>
<dbReference type="PaxDb" id="392499-Swit_2142"/>
<dbReference type="KEGG" id="swi:Swit_2142"/>
<dbReference type="eggNOG" id="COG0217">
    <property type="taxonomic scope" value="Bacteria"/>
</dbReference>
<dbReference type="HOGENOM" id="CLU_062974_2_2_5"/>
<dbReference type="OrthoDB" id="9781053at2"/>
<dbReference type="Proteomes" id="UP000001989">
    <property type="component" value="Chromosome"/>
</dbReference>
<dbReference type="GO" id="GO:0005829">
    <property type="term" value="C:cytosol"/>
    <property type="evidence" value="ECO:0007669"/>
    <property type="project" value="TreeGrafter"/>
</dbReference>
<dbReference type="GO" id="GO:0003677">
    <property type="term" value="F:DNA binding"/>
    <property type="evidence" value="ECO:0007669"/>
    <property type="project" value="UniProtKB-UniRule"/>
</dbReference>
<dbReference type="GO" id="GO:0006355">
    <property type="term" value="P:regulation of DNA-templated transcription"/>
    <property type="evidence" value="ECO:0007669"/>
    <property type="project" value="UniProtKB-UniRule"/>
</dbReference>
<dbReference type="FunFam" id="1.10.10.200:FF:000002">
    <property type="entry name" value="Probable transcriptional regulatory protein CLM62_37755"/>
    <property type="match status" value="1"/>
</dbReference>
<dbReference type="Gene3D" id="1.10.10.200">
    <property type="match status" value="1"/>
</dbReference>
<dbReference type="Gene3D" id="3.30.70.980">
    <property type="match status" value="2"/>
</dbReference>
<dbReference type="HAMAP" id="MF_00693">
    <property type="entry name" value="Transcrip_reg_TACO1"/>
    <property type="match status" value="1"/>
</dbReference>
<dbReference type="InterPro" id="IPR017856">
    <property type="entry name" value="Integrase-like_N"/>
</dbReference>
<dbReference type="InterPro" id="IPR048300">
    <property type="entry name" value="TACO1_YebC-like_2nd/3rd_dom"/>
</dbReference>
<dbReference type="InterPro" id="IPR049083">
    <property type="entry name" value="TACO1_YebC_N"/>
</dbReference>
<dbReference type="InterPro" id="IPR002876">
    <property type="entry name" value="Transcrip_reg_TACO1-like"/>
</dbReference>
<dbReference type="InterPro" id="IPR026564">
    <property type="entry name" value="Transcrip_reg_TACO1-like_dom3"/>
</dbReference>
<dbReference type="InterPro" id="IPR029072">
    <property type="entry name" value="YebC-like"/>
</dbReference>
<dbReference type="NCBIfam" id="NF001030">
    <property type="entry name" value="PRK00110.1"/>
    <property type="match status" value="1"/>
</dbReference>
<dbReference type="NCBIfam" id="NF009044">
    <property type="entry name" value="PRK12378.1"/>
    <property type="match status" value="1"/>
</dbReference>
<dbReference type="NCBIfam" id="TIGR01033">
    <property type="entry name" value="YebC/PmpR family DNA-binding transcriptional regulator"/>
    <property type="match status" value="1"/>
</dbReference>
<dbReference type="PANTHER" id="PTHR12532:SF6">
    <property type="entry name" value="TRANSCRIPTIONAL REGULATORY PROTEIN YEBC-RELATED"/>
    <property type="match status" value="1"/>
</dbReference>
<dbReference type="PANTHER" id="PTHR12532">
    <property type="entry name" value="TRANSLATIONAL ACTIVATOR OF CYTOCHROME C OXIDASE 1"/>
    <property type="match status" value="1"/>
</dbReference>
<dbReference type="Pfam" id="PF20772">
    <property type="entry name" value="TACO1_YebC_N"/>
    <property type="match status" value="1"/>
</dbReference>
<dbReference type="Pfam" id="PF01709">
    <property type="entry name" value="Transcrip_reg"/>
    <property type="match status" value="1"/>
</dbReference>
<dbReference type="SUPFAM" id="SSF75625">
    <property type="entry name" value="YebC-like"/>
    <property type="match status" value="1"/>
</dbReference>
<organism>
    <name type="scientific">Rhizorhabdus wittichii (strain DSM 6014 / CCUG 31198 / JCM 15750 / NBRC 105917 / EY 4224 / RW1)</name>
    <name type="common">Sphingomonas wittichii</name>
    <dbReference type="NCBI Taxonomy" id="392499"/>
    <lineage>
        <taxon>Bacteria</taxon>
        <taxon>Pseudomonadati</taxon>
        <taxon>Pseudomonadota</taxon>
        <taxon>Alphaproteobacteria</taxon>
        <taxon>Sphingomonadales</taxon>
        <taxon>Sphingomonadaceae</taxon>
        <taxon>Rhizorhabdus</taxon>
    </lineage>
</organism>
<proteinExistence type="inferred from homology"/>